<gene>
    <name type="primary">USP40</name>
</gene>
<reference key="1">
    <citation type="journal article" date="2004" name="Biochem. Biophys. Res. Commun.">
        <title>Cloning and enzymatic analysis of 22 novel human ubiquitin-specific proteases.</title>
        <authorList>
            <person name="Quesada V."/>
            <person name="Diaz-Perales A."/>
            <person name="Gutierrez-Fernandez A."/>
            <person name="Garabaya C."/>
            <person name="Cal S."/>
            <person name="Lopez-Otin C."/>
        </authorList>
    </citation>
    <scope>NUCLEOTIDE SEQUENCE [MRNA] (ISOFORM 3)</scope>
    <scope>LACK OF ENZYME ACTIVITY</scope>
    <scope>TISSUE SPECIFICITY</scope>
</reference>
<reference key="2">
    <citation type="journal article" date="2004" name="Nat. Genet.">
        <title>Complete sequencing and characterization of 21,243 full-length human cDNAs.</title>
        <authorList>
            <person name="Ota T."/>
            <person name="Suzuki Y."/>
            <person name="Nishikawa T."/>
            <person name="Otsuki T."/>
            <person name="Sugiyama T."/>
            <person name="Irie R."/>
            <person name="Wakamatsu A."/>
            <person name="Hayashi K."/>
            <person name="Sato H."/>
            <person name="Nagai K."/>
            <person name="Kimura K."/>
            <person name="Makita H."/>
            <person name="Sekine M."/>
            <person name="Obayashi M."/>
            <person name="Nishi T."/>
            <person name="Shibahara T."/>
            <person name="Tanaka T."/>
            <person name="Ishii S."/>
            <person name="Yamamoto J."/>
            <person name="Saito K."/>
            <person name="Kawai Y."/>
            <person name="Isono Y."/>
            <person name="Nakamura Y."/>
            <person name="Nagahari K."/>
            <person name="Murakami K."/>
            <person name="Yasuda T."/>
            <person name="Iwayanagi T."/>
            <person name="Wagatsuma M."/>
            <person name="Shiratori A."/>
            <person name="Sudo H."/>
            <person name="Hosoiri T."/>
            <person name="Kaku Y."/>
            <person name="Kodaira H."/>
            <person name="Kondo H."/>
            <person name="Sugawara M."/>
            <person name="Takahashi M."/>
            <person name="Kanda K."/>
            <person name="Yokoi T."/>
            <person name="Furuya T."/>
            <person name="Kikkawa E."/>
            <person name="Omura Y."/>
            <person name="Abe K."/>
            <person name="Kamihara K."/>
            <person name="Katsuta N."/>
            <person name="Sato K."/>
            <person name="Tanikawa M."/>
            <person name="Yamazaki M."/>
            <person name="Ninomiya K."/>
            <person name="Ishibashi T."/>
            <person name="Yamashita H."/>
            <person name="Murakawa K."/>
            <person name="Fujimori K."/>
            <person name="Tanai H."/>
            <person name="Kimata M."/>
            <person name="Watanabe M."/>
            <person name="Hiraoka S."/>
            <person name="Chiba Y."/>
            <person name="Ishida S."/>
            <person name="Ono Y."/>
            <person name="Takiguchi S."/>
            <person name="Watanabe S."/>
            <person name="Yosida M."/>
            <person name="Hotuta T."/>
            <person name="Kusano J."/>
            <person name="Kanehori K."/>
            <person name="Takahashi-Fujii A."/>
            <person name="Hara H."/>
            <person name="Tanase T.-O."/>
            <person name="Nomura Y."/>
            <person name="Togiya S."/>
            <person name="Komai F."/>
            <person name="Hara R."/>
            <person name="Takeuchi K."/>
            <person name="Arita M."/>
            <person name="Imose N."/>
            <person name="Musashino K."/>
            <person name="Yuuki H."/>
            <person name="Oshima A."/>
            <person name="Sasaki N."/>
            <person name="Aotsuka S."/>
            <person name="Yoshikawa Y."/>
            <person name="Matsunawa H."/>
            <person name="Ichihara T."/>
            <person name="Shiohata N."/>
            <person name="Sano S."/>
            <person name="Moriya S."/>
            <person name="Momiyama H."/>
            <person name="Satoh N."/>
            <person name="Takami S."/>
            <person name="Terashima Y."/>
            <person name="Suzuki O."/>
            <person name="Nakagawa S."/>
            <person name="Senoh A."/>
            <person name="Mizoguchi H."/>
            <person name="Goto Y."/>
            <person name="Shimizu F."/>
            <person name="Wakebe H."/>
            <person name="Hishigaki H."/>
            <person name="Watanabe T."/>
            <person name="Sugiyama A."/>
            <person name="Takemoto M."/>
            <person name="Kawakami B."/>
            <person name="Yamazaki M."/>
            <person name="Watanabe K."/>
            <person name="Kumagai A."/>
            <person name="Itakura S."/>
            <person name="Fukuzumi Y."/>
            <person name="Fujimori Y."/>
            <person name="Komiyama M."/>
            <person name="Tashiro H."/>
            <person name="Tanigami A."/>
            <person name="Fujiwara T."/>
            <person name="Ono T."/>
            <person name="Yamada K."/>
            <person name="Fujii Y."/>
            <person name="Ozaki K."/>
            <person name="Hirao M."/>
            <person name="Ohmori Y."/>
            <person name="Kawabata A."/>
            <person name="Hikiji T."/>
            <person name="Kobatake N."/>
            <person name="Inagaki H."/>
            <person name="Ikema Y."/>
            <person name="Okamoto S."/>
            <person name="Okitani R."/>
            <person name="Kawakami T."/>
            <person name="Noguchi S."/>
            <person name="Itoh T."/>
            <person name="Shigeta K."/>
            <person name="Senba T."/>
            <person name="Matsumura K."/>
            <person name="Nakajima Y."/>
            <person name="Mizuno T."/>
            <person name="Morinaga M."/>
            <person name="Sasaki M."/>
            <person name="Togashi T."/>
            <person name="Oyama M."/>
            <person name="Hata H."/>
            <person name="Watanabe M."/>
            <person name="Komatsu T."/>
            <person name="Mizushima-Sugano J."/>
            <person name="Satoh T."/>
            <person name="Shirai Y."/>
            <person name="Takahashi Y."/>
            <person name="Nakagawa K."/>
            <person name="Okumura K."/>
            <person name="Nagase T."/>
            <person name="Nomura N."/>
            <person name="Kikuchi H."/>
            <person name="Masuho Y."/>
            <person name="Yamashita R."/>
            <person name="Nakai K."/>
            <person name="Yada T."/>
            <person name="Nakamura Y."/>
            <person name="Ohara O."/>
            <person name="Isogai T."/>
            <person name="Sugano S."/>
        </authorList>
    </citation>
    <scope>NUCLEOTIDE SEQUENCE [LARGE SCALE MRNA] (ISOFORM 2)</scope>
    <scope>NUCLEOTIDE SEQUENCE [LARGE SCALE MRNA] OF 2-1142 (ISOFORM 1)</scope>
    <source>
        <tissue>Esophagus</tissue>
        <tissue>Teratocarcinoma</tissue>
    </source>
</reference>
<reference key="3">
    <citation type="journal article" date="2005" name="Nature">
        <title>Generation and annotation of the DNA sequences of human chromosomes 2 and 4.</title>
        <authorList>
            <person name="Hillier L.W."/>
            <person name="Graves T.A."/>
            <person name="Fulton R.S."/>
            <person name="Fulton L.A."/>
            <person name="Pepin K.H."/>
            <person name="Minx P."/>
            <person name="Wagner-McPherson C."/>
            <person name="Layman D."/>
            <person name="Wylie K."/>
            <person name="Sekhon M."/>
            <person name="Becker M.C."/>
            <person name="Fewell G.A."/>
            <person name="Delehaunty K.D."/>
            <person name="Miner T.L."/>
            <person name="Nash W.E."/>
            <person name="Kremitzki C."/>
            <person name="Oddy L."/>
            <person name="Du H."/>
            <person name="Sun H."/>
            <person name="Bradshaw-Cordum H."/>
            <person name="Ali J."/>
            <person name="Carter J."/>
            <person name="Cordes M."/>
            <person name="Harris A."/>
            <person name="Isak A."/>
            <person name="van Brunt A."/>
            <person name="Nguyen C."/>
            <person name="Du F."/>
            <person name="Courtney L."/>
            <person name="Kalicki J."/>
            <person name="Ozersky P."/>
            <person name="Abbott S."/>
            <person name="Armstrong J."/>
            <person name="Belter E.A."/>
            <person name="Caruso L."/>
            <person name="Cedroni M."/>
            <person name="Cotton M."/>
            <person name="Davidson T."/>
            <person name="Desai A."/>
            <person name="Elliott G."/>
            <person name="Erb T."/>
            <person name="Fronick C."/>
            <person name="Gaige T."/>
            <person name="Haakenson W."/>
            <person name="Haglund K."/>
            <person name="Holmes A."/>
            <person name="Harkins R."/>
            <person name="Kim K."/>
            <person name="Kruchowski S.S."/>
            <person name="Strong C.M."/>
            <person name="Grewal N."/>
            <person name="Goyea E."/>
            <person name="Hou S."/>
            <person name="Levy A."/>
            <person name="Martinka S."/>
            <person name="Mead K."/>
            <person name="McLellan M.D."/>
            <person name="Meyer R."/>
            <person name="Randall-Maher J."/>
            <person name="Tomlinson C."/>
            <person name="Dauphin-Kohlberg S."/>
            <person name="Kozlowicz-Reilly A."/>
            <person name="Shah N."/>
            <person name="Swearengen-Shahid S."/>
            <person name="Snider J."/>
            <person name="Strong J.T."/>
            <person name="Thompson J."/>
            <person name="Yoakum M."/>
            <person name="Leonard S."/>
            <person name="Pearman C."/>
            <person name="Trani L."/>
            <person name="Radionenko M."/>
            <person name="Waligorski J.E."/>
            <person name="Wang C."/>
            <person name="Rock S.M."/>
            <person name="Tin-Wollam A.-M."/>
            <person name="Maupin R."/>
            <person name="Latreille P."/>
            <person name="Wendl M.C."/>
            <person name="Yang S.-P."/>
            <person name="Pohl C."/>
            <person name="Wallis J.W."/>
            <person name="Spieth J."/>
            <person name="Bieri T.A."/>
            <person name="Berkowicz N."/>
            <person name="Nelson J.O."/>
            <person name="Osborne J."/>
            <person name="Ding L."/>
            <person name="Meyer R."/>
            <person name="Sabo A."/>
            <person name="Shotland Y."/>
            <person name="Sinha P."/>
            <person name="Wohldmann P.E."/>
            <person name="Cook L.L."/>
            <person name="Hickenbotham M.T."/>
            <person name="Eldred J."/>
            <person name="Williams D."/>
            <person name="Jones T.A."/>
            <person name="She X."/>
            <person name="Ciccarelli F.D."/>
            <person name="Izaurralde E."/>
            <person name="Taylor J."/>
            <person name="Schmutz J."/>
            <person name="Myers R.M."/>
            <person name="Cox D.R."/>
            <person name="Huang X."/>
            <person name="McPherson J.D."/>
            <person name="Mardis E.R."/>
            <person name="Clifton S.W."/>
            <person name="Warren W.C."/>
            <person name="Chinwalla A.T."/>
            <person name="Eddy S.R."/>
            <person name="Marra M.A."/>
            <person name="Ovcharenko I."/>
            <person name="Furey T.S."/>
            <person name="Miller W."/>
            <person name="Eichler E.E."/>
            <person name="Bork P."/>
            <person name="Suyama M."/>
            <person name="Torrents D."/>
            <person name="Waterston R.H."/>
            <person name="Wilson R.K."/>
        </authorList>
    </citation>
    <scope>NUCLEOTIDE SEQUENCE [LARGE SCALE GENOMIC DNA]</scope>
</reference>
<reference key="4">
    <citation type="journal article" date="2004" name="Genome Res.">
        <title>The status, quality, and expansion of the NIH full-length cDNA project: the Mammalian Gene Collection (MGC).</title>
        <authorList>
            <consortium name="The MGC Project Team"/>
        </authorList>
    </citation>
    <scope>NUCLEOTIDE SEQUENCE [LARGE SCALE MRNA] OF 1-318 (ISOFORM 1)</scope>
    <source>
        <tissue>Testis</tissue>
    </source>
</reference>
<reference key="5">
    <citation type="journal article" date="2014" name="J. Proteomics">
        <title>An enzyme assisted RP-RPLC approach for in-depth analysis of human liver phosphoproteome.</title>
        <authorList>
            <person name="Bian Y."/>
            <person name="Song C."/>
            <person name="Cheng K."/>
            <person name="Dong M."/>
            <person name="Wang F."/>
            <person name="Huang J."/>
            <person name="Sun D."/>
            <person name="Wang L."/>
            <person name="Ye M."/>
            <person name="Zou H."/>
        </authorList>
    </citation>
    <scope>IDENTIFICATION BY MASS SPECTROMETRY [LARGE SCALE ANALYSIS]</scope>
    <source>
        <tissue>Liver</tissue>
    </source>
</reference>
<dbReference type="EC" id="3.4.19.12"/>
<dbReference type="EMBL" id="AJ583821">
    <property type="protein sequence ID" value="CAE47748.2"/>
    <property type="molecule type" value="mRNA"/>
</dbReference>
<dbReference type="EMBL" id="AK001647">
    <property type="protein sequence ID" value="BAA91807.1"/>
    <property type="status" value="ALT_INIT"/>
    <property type="molecule type" value="mRNA"/>
</dbReference>
<dbReference type="EMBL" id="AK124094">
    <property type="protein sequence ID" value="BAC85770.1"/>
    <property type="molecule type" value="mRNA"/>
</dbReference>
<dbReference type="EMBL" id="AC019221">
    <property type="status" value="NOT_ANNOTATED_CDS"/>
    <property type="molecule type" value="Genomic_DNA"/>
</dbReference>
<dbReference type="EMBL" id="AC019072">
    <property type="status" value="NOT_ANNOTATED_CDS"/>
    <property type="molecule type" value="Genomic_DNA"/>
</dbReference>
<dbReference type="EMBL" id="BC067300">
    <property type="protein sequence ID" value="AAH67300.1"/>
    <property type="molecule type" value="mRNA"/>
</dbReference>
<dbReference type="CCDS" id="CCDS46547.2">
    <molecule id="Q9NVE5-1"/>
</dbReference>
<dbReference type="RefSeq" id="NP_060688.2">
    <molecule id="Q9NVE5-1"/>
    <property type="nucleotide sequence ID" value="NM_018218.4"/>
</dbReference>
<dbReference type="SMR" id="Q9NVE5"/>
<dbReference type="BioGRID" id="120525">
    <property type="interactions" value="51"/>
</dbReference>
<dbReference type="FunCoup" id="Q9NVE5">
    <property type="interactions" value="3217"/>
</dbReference>
<dbReference type="IntAct" id="Q9NVE5">
    <property type="interactions" value="1"/>
</dbReference>
<dbReference type="STRING" id="9606.ENSP00000415434"/>
<dbReference type="MEROPS" id="C19.069"/>
<dbReference type="iPTMnet" id="Q9NVE5"/>
<dbReference type="PhosphoSitePlus" id="Q9NVE5"/>
<dbReference type="BioMuta" id="USP40"/>
<dbReference type="DMDM" id="59803114"/>
<dbReference type="jPOST" id="Q9NVE5"/>
<dbReference type="MassIVE" id="Q9NVE5"/>
<dbReference type="PaxDb" id="9606-ENSP00000415434"/>
<dbReference type="PeptideAtlas" id="Q9NVE5"/>
<dbReference type="ProteomicsDB" id="82785">
    <molecule id="Q9NVE5-1"/>
</dbReference>
<dbReference type="ProteomicsDB" id="82786">
    <molecule id="Q9NVE5-2"/>
</dbReference>
<dbReference type="ProteomicsDB" id="82787">
    <molecule id="Q9NVE5-3"/>
</dbReference>
<dbReference type="Pumba" id="Q9NVE5"/>
<dbReference type="Antibodypedia" id="965">
    <property type="antibodies" value="131 antibodies from 23 providers"/>
</dbReference>
<dbReference type="DNASU" id="55230"/>
<dbReference type="Ensembl" id="ENST00000251722.10">
    <molecule id="Q9NVE5-1"/>
    <property type="protein sequence ID" value="ENSP00000251722.6"/>
    <property type="gene ID" value="ENSG00000085982.16"/>
</dbReference>
<dbReference type="Ensembl" id="ENST00000427112.6">
    <molecule id="Q9NVE5-1"/>
    <property type="protein sequence ID" value="ENSP00000387898.2"/>
    <property type="gene ID" value="ENSG00000085982.16"/>
</dbReference>
<dbReference type="GeneID" id="55230"/>
<dbReference type="KEGG" id="hsa:55230"/>
<dbReference type="UCSC" id="uc002vuo.1">
    <molecule id="Q9NVE5-1"/>
    <property type="organism name" value="human"/>
</dbReference>
<dbReference type="AGR" id="HGNC:20069"/>
<dbReference type="CTD" id="55230"/>
<dbReference type="DisGeNET" id="55230"/>
<dbReference type="GeneCards" id="USP40"/>
<dbReference type="HGNC" id="HGNC:20069">
    <property type="gene designation" value="USP40"/>
</dbReference>
<dbReference type="HPA" id="ENSG00000085982">
    <property type="expression patterns" value="Low tissue specificity"/>
</dbReference>
<dbReference type="MIM" id="610570">
    <property type="type" value="gene"/>
</dbReference>
<dbReference type="neXtProt" id="NX_Q9NVE5"/>
<dbReference type="OpenTargets" id="ENSG00000085982"/>
<dbReference type="PharmGKB" id="PA134909324"/>
<dbReference type="VEuPathDB" id="HostDB:ENSG00000085982"/>
<dbReference type="eggNOG" id="KOG1863">
    <property type="taxonomic scope" value="Eukaryota"/>
</dbReference>
<dbReference type="GeneTree" id="ENSGT00940000157267"/>
<dbReference type="HOGENOM" id="CLU_009719_0_0_1"/>
<dbReference type="InParanoid" id="Q9NVE5"/>
<dbReference type="OMA" id="PEGSHWF"/>
<dbReference type="OrthoDB" id="289038at2759"/>
<dbReference type="PAN-GO" id="Q9NVE5">
    <property type="GO annotations" value="6 GO annotations based on evolutionary models"/>
</dbReference>
<dbReference type="PhylomeDB" id="Q9NVE5"/>
<dbReference type="TreeFam" id="TF106281"/>
<dbReference type="PathwayCommons" id="Q9NVE5"/>
<dbReference type="SignaLink" id="Q9NVE5"/>
<dbReference type="BioGRID-ORCS" id="55230">
    <property type="hits" value="12 hits in 1199 CRISPR screens"/>
</dbReference>
<dbReference type="ChiTaRS" id="USP40">
    <property type="organism name" value="human"/>
</dbReference>
<dbReference type="GeneWiki" id="USP40"/>
<dbReference type="GenomeRNAi" id="55230"/>
<dbReference type="Pharos" id="Q9NVE5">
    <property type="development level" value="Tbio"/>
</dbReference>
<dbReference type="PRO" id="PR:Q9NVE5"/>
<dbReference type="Proteomes" id="UP000005640">
    <property type="component" value="Chromosome 2"/>
</dbReference>
<dbReference type="RNAct" id="Q9NVE5">
    <property type="molecule type" value="protein"/>
</dbReference>
<dbReference type="Bgee" id="ENSG00000085982">
    <property type="expression patterns" value="Expressed in adrenal tissue and 149 other cell types or tissues"/>
</dbReference>
<dbReference type="ExpressionAtlas" id="Q9NVE5">
    <property type="expression patterns" value="baseline and differential"/>
</dbReference>
<dbReference type="GO" id="GO:0005829">
    <property type="term" value="C:cytosol"/>
    <property type="evidence" value="ECO:0000318"/>
    <property type="project" value="GO_Central"/>
</dbReference>
<dbReference type="GO" id="GO:0005634">
    <property type="term" value="C:nucleus"/>
    <property type="evidence" value="ECO:0000318"/>
    <property type="project" value="GO_Central"/>
</dbReference>
<dbReference type="GO" id="GO:0004843">
    <property type="term" value="F:cysteine-type deubiquitinase activity"/>
    <property type="evidence" value="ECO:0000318"/>
    <property type="project" value="GO_Central"/>
</dbReference>
<dbReference type="GO" id="GO:0016579">
    <property type="term" value="P:protein deubiquitination"/>
    <property type="evidence" value="ECO:0007669"/>
    <property type="project" value="InterPro"/>
</dbReference>
<dbReference type="GO" id="GO:0006508">
    <property type="term" value="P:proteolysis"/>
    <property type="evidence" value="ECO:0007669"/>
    <property type="project" value="UniProtKB-KW"/>
</dbReference>
<dbReference type="GO" id="GO:0031647">
    <property type="term" value="P:regulation of protein stability"/>
    <property type="evidence" value="ECO:0000318"/>
    <property type="project" value="GO_Central"/>
</dbReference>
<dbReference type="CDD" id="cd02659">
    <property type="entry name" value="peptidase_C19C"/>
    <property type="match status" value="1"/>
</dbReference>
<dbReference type="FunFam" id="3.90.70.10:FF:000043">
    <property type="entry name" value="Ubiquitin carboxyl-terminal hydrolase 40"/>
    <property type="match status" value="1"/>
</dbReference>
<dbReference type="FunFam" id="3.90.70.10:FF:000101">
    <property type="entry name" value="Ubiquitin specific peptidase 40"/>
    <property type="match status" value="1"/>
</dbReference>
<dbReference type="Gene3D" id="3.90.70.10">
    <property type="entry name" value="Cysteine proteinases"/>
    <property type="match status" value="2"/>
</dbReference>
<dbReference type="InterPro" id="IPR038765">
    <property type="entry name" value="Papain-like_cys_pep_sf"/>
</dbReference>
<dbReference type="InterPro" id="IPR050164">
    <property type="entry name" value="Peptidase_C19"/>
</dbReference>
<dbReference type="InterPro" id="IPR001394">
    <property type="entry name" value="Peptidase_C19_UCH"/>
</dbReference>
<dbReference type="InterPro" id="IPR018200">
    <property type="entry name" value="USP_CS"/>
</dbReference>
<dbReference type="InterPro" id="IPR028889">
    <property type="entry name" value="USP_dom"/>
</dbReference>
<dbReference type="PANTHER" id="PTHR24006">
    <property type="entry name" value="UBIQUITIN CARBOXYL-TERMINAL HYDROLASE"/>
    <property type="match status" value="1"/>
</dbReference>
<dbReference type="PANTHER" id="PTHR24006:SF842">
    <property type="entry name" value="UBIQUITIN CARBOXYL-TERMINAL HYDROLASE 40"/>
    <property type="match status" value="1"/>
</dbReference>
<dbReference type="Pfam" id="PF00443">
    <property type="entry name" value="UCH"/>
    <property type="match status" value="1"/>
</dbReference>
<dbReference type="SUPFAM" id="SSF54001">
    <property type="entry name" value="Cysteine proteinases"/>
    <property type="match status" value="1"/>
</dbReference>
<dbReference type="PROSITE" id="PS00972">
    <property type="entry name" value="USP_1"/>
    <property type="match status" value="1"/>
</dbReference>
<dbReference type="PROSITE" id="PS00973">
    <property type="entry name" value="USP_2"/>
    <property type="match status" value="1"/>
</dbReference>
<dbReference type="PROSITE" id="PS50235">
    <property type="entry name" value="USP_3"/>
    <property type="match status" value="1"/>
</dbReference>
<organism>
    <name type="scientific">Homo sapiens</name>
    <name type="common">Human</name>
    <dbReference type="NCBI Taxonomy" id="9606"/>
    <lineage>
        <taxon>Eukaryota</taxon>
        <taxon>Metazoa</taxon>
        <taxon>Chordata</taxon>
        <taxon>Craniata</taxon>
        <taxon>Vertebrata</taxon>
        <taxon>Euteleostomi</taxon>
        <taxon>Mammalia</taxon>
        <taxon>Eutheria</taxon>
        <taxon>Euarchontoglires</taxon>
        <taxon>Primates</taxon>
        <taxon>Haplorrhini</taxon>
        <taxon>Catarrhini</taxon>
        <taxon>Hominidae</taxon>
        <taxon>Homo</taxon>
    </lineage>
</organism>
<accession>Q9NVE5</accession>
<accession>Q6NX38</accession>
<accession>Q70EL0</accession>
<evidence type="ECO:0000255" key="1">
    <source>
        <dbReference type="PROSITE-ProRule" id="PRU10092"/>
    </source>
</evidence>
<evidence type="ECO:0000255" key="2">
    <source>
        <dbReference type="PROSITE-ProRule" id="PRU10093"/>
    </source>
</evidence>
<evidence type="ECO:0000256" key="3">
    <source>
        <dbReference type="SAM" id="MobiDB-lite"/>
    </source>
</evidence>
<evidence type="ECO:0000269" key="4">
    <source>
    </source>
</evidence>
<evidence type="ECO:0000303" key="5">
    <source>
    </source>
</evidence>
<evidence type="ECO:0000303" key="6">
    <source>
    </source>
</evidence>
<evidence type="ECO:0000305" key="7"/>
<comment type="function">
    <text>May be catalytically inactive.</text>
</comment>
<comment type="catalytic activity">
    <reaction>
        <text>Thiol-dependent hydrolysis of ester, thioester, amide, peptide and isopeptide bonds formed by the C-terminal Gly of ubiquitin (a 76-residue protein attached to proteins as an intracellular targeting signal).</text>
        <dbReference type="EC" id="3.4.19.12"/>
    </reaction>
</comment>
<comment type="alternative products">
    <event type="alternative splicing"/>
    <isoform>
        <id>Q9NVE5-1</id>
        <name>1</name>
        <sequence type="displayed"/>
    </isoform>
    <isoform>
        <id>Q9NVE5-2</id>
        <name>2</name>
        <sequence type="described" ref="VSP_008595 VSP_008596 VSP_012819"/>
    </isoform>
    <isoform>
        <id>Q9NVE5-3</id>
        <name>3</name>
        <sequence type="described" ref="VSP_040938"/>
    </isoform>
</comment>
<comment type="tissue specificity">
    <text evidence="4">Broadly expressed.</text>
</comment>
<comment type="similarity">
    <text evidence="7">Belongs to the peptidase C19 family.</text>
</comment>
<comment type="sequence caution" evidence="7">
    <conflict type="erroneous initiation">
        <sequence resource="EMBL-CDS" id="BAA91807"/>
    </conflict>
    <text>Truncated N-terminus.</text>
</comment>
<sequence length="1235" mass="140130">MFGDLFEEEYSTVSNNQYGKGKKLKTKALEPPAPREFTNLSGIRNQGGTCYLNSLLQTLHFTPEFREALFSLGPEELGLFEDKDKPDAKVRIIPLQLQRLFAQLLLLDQEAASTADLTDSFGWTSNEEMRQHDVQELNRILFSALETSLVGTSGHDLIYRLYHGTIVNQIVCKECKNVSERQEDFLDLTVAVKNVSGLEDALWNMYVEEEVFDCDNLYHCGTCDRLVKAAKSAKLRKLPPFLTVSLLRFNFDFVKCERYKETSCYTFPLRINLKPFCEQSELDDLEYIYDLFSVIIHKGGCYGGHYHVYIKDVDHLGNWQFQEEKSKPDVNLKDLQSEEEIDHPLMILKAILLEENNLIPVDQLGQKLLKKIGISWNKKYRKQHGPLRKFLQLHSQIFLLSSDESTVRLLKNSSLQAESDFQRNDQQIFKMLPPESPGLNNSISCPHWFDINDSKVQPIREKDIEQQFQGKESAYMLFYRKSQLQRPPEARANPRYGVPCHLLNEMDAANIELQTKRAECDSANNTFELHLHLGPQYHFFNGALHPVVSQTESVWDLTFDKRKTLGDLRQSIFQLLEFWEGDMVLSVAKLVPAGLHIYQSLGGDELTLCETEIADGEDIFVWNGVEVGGVHIQTGIDCEPLLLNVLHLDTSSDGEKCCQVIESPHVFPANAEVGTVLTALAIPAGVIFINSAGCPGGEGWTAIPKEDMRKTFREQGLRNGSSILIQDSHDDNSLLTKEEKWVTSMNEIDWLHVKNLCQLESEEKQVKISATVNTMVFDIRIKAIKELKLMKELADNSCLRPIDRNGKLLCPVPDSYTLKEAELKMGSSLGLCLGKAPSSSQLFLFFAMGSDVQPGTEMEIVVEETISVRDCLKLMLKKSGLQGDAWHLRKMDWCYEAGEPLCEEDATLKELLICSGDTLLLIEGQLPPLGFLKVPIWWYQLQGPSGHWESHQDQTNCTSSWGRVWRATSSQGASGNEPAQVSLLYLGDIEISEDATLAELKSQAMTLPPFLEFGVPSPAHLRAWTVERKRPGRLLRTDRQPLREYKLGRRIEICLEPLQKGENLGPQDVLLRTQVRIPGERTYAPALDLVWNAAQGGTAGSLRQRVADFYRLPVEKIEIAKYFPEKFEWLPISSWNQQITKRKKKKKQDYLQGAPYYLKDGDTIGVKNLLIDDDDDFSTIRDDTGKEKQKQRALGRRKSQEALHEQSSYILSSAETPARPRAPETSLSIHVGSFR</sequence>
<feature type="chain" id="PRO_0000080670" description="Ubiquitin carboxyl-terminal hydrolase 40">
    <location>
        <begin position="1"/>
        <end position="1235"/>
    </location>
</feature>
<feature type="domain" description="USP">
    <location>
        <begin position="41"/>
        <end position="482"/>
    </location>
</feature>
<feature type="region of interest" description="Disordered" evidence="3">
    <location>
        <begin position="1180"/>
        <end position="1235"/>
    </location>
</feature>
<feature type="compositionally biased region" description="Basic and acidic residues" evidence="3">
    <location>
        <begin position="1180"/>
        <end position="1190"/>
    </location>
</feature>
<feature type="compositionally biased region" description="Polar residues" evidence="3">
    <location>
        <begin position="1205"/>
        <end position="1215"/>
    </location>
</feature>
<feature type="active site" description="Nucleophile" evidence="1 2">
    <location>
        <position position="50"/>
    </location>
</feature>
<feature type="active site" description="Proton acceptor" evidence="1 2">
    <location>
        <position position="305"/>
    </location>
</feature>
<feature type="splice variant" id="VSP_008595" description="In isoform 2." evidence="5">
    <location>
        <begin position="1"/>
        <end position="824"/>
    </location>
</feature>
<feature type="splice variant" id="VSP_040938" description="In isoform 3." evidence="6">
    <original>M</original>
    <variation>MSLFLRVVFSFTM</variation>
    <location>
        <position position="1"/>
    </location>
</feature>
<feature type="splice variant" id="VSP_008596" description="In isoform 2." evidence="5">
    <original>ASGNEPAQVSLLYLG</original>
    <variation>ENRMGFQQPVHHKEK</variation>
    <location>
        <begin position="973"/>
        <end position="987"/>
    </location>
</feature>
<feature type="splice variant" id="VSP_012819" description="In isoform 2." evidence="5">
    <location>
        <begin position="988"/>
        <end position="1235"/>
    </location>
</feature>
<feature type="sequence variant" id="VAR_017123" description="In dbSNP:rs838543.">
    <original>V</original>
    <variation>A</variation>
    <location>
        <position position="666"/>
    </location>
</feature>
<feature type="sequence variant" id="VAR_059753" description="In dbSNP:rs34026756.">
    <original>T</original>
    <variation>M</variation>
    <location>
        <position position="1025"/>
    </location>
</feature>
<feature type="sequence variant" id="VAR_017124" description="In dbSNP:rs1048603.">
    <original>R</original>
    <variation>C</variation>
    <location>
        <position position="1111"/>
    </location>
</feature>
<feature type="sequence conflict" description="In Ref. 4; AAH67300." evidence="7" ref="4">
    <original>CEQSELDDLEYIYDLFSVIIHKGGCYGGHYHVYIKDVDHLGN</original>
    <variation>FFSFNQKMHNVCVNRRYGGSGMPLLRCGRCVGSAQPLSSVFR</variation>
    <location>
        <begin position="277"/>
        <end position="318"/>
    </location>
</feature>
<name>UBP40_HUMAN</name>
<protein>
    <recommendedName>
        <fullName>Ubiquitin carboxyl-terminal hydrolase 40</fullName>
        <ecNumber>3.4.19.12</ecNumber>
    </recommendedName>
    <alternativeName>
        <fullName>Deubiquitinating enzyme 40</fullName>
    </alternativeName>
    <alternativeName>
        <fullName>Ubiquitin thioesterase 40</fullName>
    </alternativeName>
    <alternativeName>
        <fullName>Ubiquitin-specific-processing protease 40</fullName>
    </alternativeName>
</protein>
<proteinExistence type="evidence at protein level"/>
<keyword id="KW-0025">Alternative splicing</keyword>
<keyword id="KW-0378">Hydrolase</keyword>
<keyword id="KW-0645">Protease</keyword>
<keyword id="KW-1267">Proteomics identification</keyword>
<keyword id="KW-1185">Reference proteome</keyword>
<keyword id="KW-0788">Thiol protease</keyword>
<keyword id="KW-0833">Ubl conjugation pathway</keyword>